<accession>B2HQP4</accession>
<keyword id="KW-1003">Cell membrane</keyword>
<keyword id="KW-0210">Decarboxylase</keyword>
<keyword id="KW-0444">Lipid biosynthesis</keyword>
<keyword id="KW-0443">Lipid metabolism</keyword>
<keyword id="KW-0456">Lyase</keyword>
<keyword id="KW-0472">Membrane</keyword>
<keyword id="KW-0594">Phospholipid biosynthesis</keyword>
<keyword id="KW-1208">Phospholipid metabolism</keyword>
<keyword id="KW-0670">Pyruvate</keyword>
<keyword id="KW-1185">Reference proteome</keyword>
<keyword id="KW-0865">Zymogen</keyword>
<comment type="function">
    <text evidence="1">Catalyzes the formation of phosphatidylethanolamine (PtdEtn) from phosphatidylserine (PtdSer).</text>
</comment>
<comment type="catalytic activity">
    <reaction evidence="1">
        <text>a 1,2-diacyl-sn-glycero-3-phospho-L-serine + H(+) = a 1,2-diacyl-sn-glycero-3-phosphoethanolamine + CO2</text>
        <dbReference type="Rhea" id="RHEA:20828"/>
        <dbReference type="ChEBI" id="CHEBI:15378"/>
        <dbReference type="ChEBI" id="CHEBI:16526"/>
        <dbReference type="ChEBI" id="CHEBI:57262"/>
        <dbReference type="ChEBI" id="CHEBI:64612"/>
        <dbReference type="EC" id="4.1.1.65"/>
    </reaction>
</comment>
<comment type="cofactor">
    <cofactor evidence="1">
        <name>pyruvate</name>
        <dbReference type="ChEBI" id="CHEBI:15361"/>
    </cofactor>
    <text evidence="1">Binds 1 pyruvoyl group covalently per subunit.</text>
</comment>
<comment type="pathway">
    <text evidence="1">Phospholipid metabolism; phosphatidylethanolamine biosynthesis; phosphatidylethanolamine from CDP-diacylglycerol: step 2/2.</text>
</comment>
<comment type="subunit">
    <text evidence="1">Heterodimer of a large membrane-associated beta subunit and a small pyruvoyl-containing alpha subunit.</text>
</comment>
<comment type="subcellular location">
    <subcellularLocation>
        <location evidence="1">Cell membrane</location>
        <topology evidence="1">Peripheral membrane protein</topology>
    </subcellularLocation>
</comment>
<comment type="PTM">
    <text evidence="1">Is synthesized initially as an inactive proenzyme. Formation of the active enzyme involves a self-maturation process in which the active site pyruvoyl group is generated from an internal serine residue via an autocatalytic post-translational modification. Two non-identical subunits are generated from the proenzyme in this reaction, and the pyruvate is formed at the N-terminus of the alpha chain, which is derived from the carboxyl end of the proenzyme. The post-translation cleavage follows an unusual pathway, termed non-hydrolytic serinolysis, in which the side chain hydroxyl group of the serine supplies its oxygen atom to form the C-terminus of the beta chain, while the remainder of the serine residue undergoes an oxidative deamination to produce ammonia and the pyruvoyl prosthetic group on the alpha chain.</text>
</comment>
<comment type="similarity">
    <text evidence="1">Belongs to the phosphatidylserine decarboxylase family. PSD-A subfamily.</text>
</comment>
<sequence length="240" mass="25179">MARRPRRSDSSSAEPTLSPQHLLALVRSTIPPIHPAGRPFIAAGLAVAGVGYRHRWARRTGLLAAGACAGFFRHPPRVPPSRAGAIVAPADGVICVIDTAAPPAELSMGDAPLPRVSIFLSVFDAHVQRAPVSGEVVAVQHRPGRFGSADLPAASDDNERNSVRIRTANGAEVVAVQVAGLVARRIVCDAHVGDKLAIGDTYGLIRFGSRLDTYLPPGTEPVVRVGQRTIAGETILADLP</sequence>
<evidence type="ECO:0000255" key="1">
    <source>
        <dbReference type="HAMAP-Rule" id="MF_00664"/>
    </source>
</evidence>
<reference key="1">
    <citation type="journal article" date="2008" name="Genome Res.">
        <title>Insights from the complete genome sequence of Mycobacterium marinum on the evolution of Mycobacterium tuberculosis.</title>
        <authorList>
            <person name="Stinear T.P."/>
            <person name="Seemann T."/>
            <person name="Harrison P.F."/>
            <person name="Jenkin G.A."/>
            <person name="Davies J.K."/>
            <person name="Johnson P.D."/>
            <person name="Abdellah Z."/>
            <person name="Arrowsmith C."/>
            <person name="Chillingworth T."/>
            <person name="Churcher C."/>
            <person name="Clarke K."/>
            <person name="Cronin A."/>
            <person name="Davis P."/>
            <person name="Goodhead I."/>
            <person name="Holroyd N."/>
            <person name="Jagels K."/>
            <person name="Lord A."/>
            <person name="Moule S."/>
            <person name="Mungall K."/>
            <person name="Norbertczak H."/>
            <person name="Quail M.A."/>
            <person name="Rabbinowitsch E."/>
            <person name="Walker D."/>
            <person name="White B."/>
            <person name="Whitehead S."/>
            <person name="Small P.L."/>
            <person name="Brosch R."/>
            <person name="Ramakrishnan L."/>
            <person name="Fischbach M.A."/>
            <person name="Parkhill J."/>
            <person name="Cole S.T."/>
        </authorList>
    </citation>
    <scope>NUCLEOTIDE SEQUENCE [LARGE SCALE GENOMIC DNA]</scope>
    <source>
        <strain>ATCC BAA-535 / M</strain>
    </source>
</reference>
<gene>
    <name evidence="1" type="primary">psd</name>
    <name type="ordered locus">MMAR_0754</name>
</gene>
<protein>
    <recommendedName>
        <fullName evidence="1">Phosphatidylserine decarboxylase proenzyme</fullName>
        <ecNumber evidence="1">4.1.1.65</ecNumber>
    </recommendedName>
    <component>
        <recommendedName>
            <fullName evidence="1">Phosphatidylserine decarboxylase alpha chain</fullName>
        </recommendedName>
    </component>
    <component>
        <recommendedName>
            <fullName evidence="1">Phosphatidylserine decarboxylase beta chain</fullName>
        </recommendedName>
    </component>
</protein>
<feature type="chain" id="PRO_1000131472" description="Phosphatidylserine decarboxylase beta chain" evidence="1">
    <location>
        <begin position="1"/>
        <end position="208"/>
    </location>
</feature>
<feature type="chain" id="PRO_1000131473" description="Phosphatidylserine decarboxylase alpha chain" evidence="1">
    <location>
        <begin position="209"/>
        <end position="240"/>
    </location>
</feature>
<feature type="active site" description="Schiff-base intermediate with substrate; via pyruvic acid" evidence="1">
    <location>
        <position position="209"/>
    </location>
</feature>
<feature type="site" description="Cleavage (non-hydrolytic); by autocatalysis" evidence="1">
    <location>
        <begin position="208"/>
        <end position="209"/>
    </location>
</feature>
<feature type="modified residue" description="Pyruvic acid (Ser); by autocatalysis" evidence="1">
    <location>
        <position position="209"/>
    </location>
</feature>
<proteinExistence type="inferred from homology"/>
<dbReference type="EC" id="4.1.1.65" evidence="1"/>
<dbReference type="EMBL" id="CP000854">
    <property type="protein sequence ID" value="ACC39214.1"/>
    <property type="molecule type" value="Genomic_DNA"/>
</dbReference>
<dbReference type="RefSeq" id="WP_012392702.1">
    <property type="nucleotide sequence ID" value="NC_010612.1"/>
</dbReference>
<dbReference type="STRING" id="216594.MMAR_0754"/>
<dbReference type="GeneID" id="34339113"/>
<dbReference type="KEGG" id="mmi:MMAR_0754"/>
<dbReference type="eggNOG" id="COG0688">
    <property type="taxonomic scope" value="Bacteria"/>
</dbReference>
<dbReference type="HOGENOM" id="CLU_072492_0_0_11"/>
<dbReference type="OrthoDB" id="9790893at2"/>
<dbReference type="UniPathway" id="UPA00558">
    <property type="reaction ID" value="UER00616"/>
</dbReference>
<dbReference type="Proteomes" id="UP000001190">
    <property type="component" value="Chromosome"/>
</dbReference>
<dbReference type="GO" id="GO:0005886">
    <property type="term" value="C:plasma membrane"/>
    <property type="evidence" value="ECO:0007669"/>
    <property type="project" value="UniProtKB-SubCell"/>
</dbReference>
<dbReference type="GO" id="GO:0004609">
    <property type="term" value="F:phosphatidylserine decarboxylase activity"/>
    <property type="evidence" value="ECO:0007669"/>
    <property type="project" value="UniProtKB-UniRule"/>
</dbReference>
<dbReference type="GO" id="GO:0006646">
    <property type="term" value="P:phosphatidylethanolamine biosynthetic process"/>
    <property type="evidence" value="ECO:0007669"/>
    <property type="project" value="UniProtKB-UniRule"/>
</dbReference>
<dbReference type="HAMAP" id="MF_00664">
    <property type="entry name" value="PS_decarb_PSD_A"/>
    <property type="match status" value="1"/>
</dbReference>
<dbReference type="InterPro" id="IPR003817">
    <property type="entry name" value="PS_Dcarbxylase"/>
</dbReference>
<dbReference type="InterPro" id="IPR033175">
    <property type="entry name" value="PSD-A"/>
</dbReference>
<dbReference type="NCBIfam" id="NF003679">
    <property type="entry name" value="PRK05305.1-3"/>
    <property type="match status" value="1"/>
</dbReference>
<dbReference type="PANTHER" id="PTHR35809">
    <property type="entry name" value="ARCHAETIDYLSERINE DECARBOXYLASE PROENZYME-RELATED"/>
    <property type="match status" value="1"/>
</dbReference>
<dbReference type="PANTHER" id="PTHR35809:SF1">
    <property type="entry name" value="ARCHAETIDYLSERINE DECARBOXYLASE PROENZYME-RELATED"/>
    <property type="match status" value="1"/>
</dbReference>
<dbReference type="Pfam" id="PF02666">
    <property type="entry name" value="PS_Dcarbxylase"/>
    <property type="match status" value="1"/>
</dbReference>
<name>PSD_MYCMM</name>
<organism>
    <name type="scientific">Mycobacterium marinum (strain ATCC BAA-535 / M)</name>
    <dbReference type="NCBI Taxonomy" id="216594"/>
    <lineage>
        <taxon>Bacteria</taxon>
        <taxon>Bacillati</taxon>
        <taxon>Actinomycetota</taxon>
        <taxon>Actinomycetes</taxon>
        <taxon>Mycobacteriales</taxon>
        <taxon>Mycobacteriaceae</taxon>
        <taxon>Mycobacterium</taxon>
        <taxon>Mycobacterium ulcerans group</taxon>
    </lineage>
</organism>